<reference key="1">
    <citation type="journal article" date="2006" name="Proc. Natl. Acad. Sci. U.S.A.">
        <title>Molecular genetic anatomy of inter- and intraserotype variation in the human bacterial pathogen group A Streptococcus.</title>
        <authorList>
            <person name="Beres S.B."/>
            <person name="Richter E.W."/>
            <person name="Nagiec M.J."/>
            <person name="Sumby P."/>
            <person name="Porcella S.F."/>
            <person name="DeLeo F.R."/>
            <person name="Musser J.M."/>
        </authorList>
    </citation>
    <scope>NUCLEOTIDE SEQUENCE [LARGE SCALE GENOMIC DNA]</scope>
    <source>
        <strain>MGAS2096</strain>
    </source>
</reference>
<accession>Q1J9P3</accession>
<sequence>METWQEVTVHVHRDAQEAVSHVLIETGSQGVAIADSADYIGQKDRFGELYPDVEQSDMIAITAYYPSSTNLADVIATINEQLAELASFGLQVGQVTVDSQELAEEDWADNWKKYYEPARITHDLTIVPSWTDYDASAGEKVIKLDPGMAFGTGTHPTTKMSLFALEQVLRGGETVIDVGTGSGVLSIASSLLGAKTIYAYDLDDVAVRVAQENIDLNQGTDNIHVAAGDLLKGVSQEADVIVANILADILVLLTDDAYRLVKKEGYLILSGIISEKLDMVLETAFSAGFFLETHMVQGEWNALVFKKTDDISGVIGG</sequence>
<keyword id="KW-0963">Cytoplasm</keyword>
<keyword id="KW-0489">Methyltransferase</keyword>
<keyword id="KW-0949">S-adenosyl-L-methionine</keyword>
<keyword id="KW-0808">Transferase</keyword>
<organism>
    <name type="scientific">Streptococcus pyogenes serotype M12 (strain MGAS2096)</name>
    <dbReference type="NCBI Taxonomy" id="370553"/>
    <lineage>
        <taxon>Bacteria</taxon>
        <taxon>Bacillati</taxon>
        <taxon>Bacillota</taxon>
        <taxon>Bacilli</taxon>
        <taxon>Lactobacillales</taxon>
        <taxon>Streptococcaceae</taxon>
        <taxon>Streptococcus</taxon>
    </lineage>
</organism>
<name>PRMA_STRPB</name>
<proteinExistence type="inferred from homology"/>
<gene>
    <name evidence="1" type="primary">prmA</name>
    <name type="ordered locus">MGAS2096_Spy1716</name>
</gene>
<dbReference type="EC" id="2.1.1.-" evidence="1"/>
<dbReference type="EMBL" id="CP000261">
    <property type="protein sequence ID" value="ABF36768.1"/>
    <property type="molecule type" value="Genomic_DNA"/>
</dbReference>
<dbReference type="SMR" id="Q1J9P3"/>
<dbReference type="KEGG" id="spj:MGAS2096_Spy1716"/>
<dbReference type="HOGENOM" id="CLU_049382_0_1_9"/>
<dbReference type="GO" id="GO:0005737">
    <property type="term" value="C:cytoplasm"/>
    <property type="evidence" value="ECO:0007669"/>
    <property type="project" value="UniProtKB-SubCell"/>
</dbReference>
<dbReference type="GO" id="GO:0016279">
    <property type="term" value="F:protein-lysine N-methyltransferase activity"/>
    <property type="evidence" value="ECO:0007669"/>
    <property type="project" value="RHEA"/>
</dbReference>
<dbReference type="GO" id="GO:0032259">
    <property type="term" value="P:methylation"/>
    <property type="evidence" value="ECO:0007669"/>
    <property type="project" value="UniProtKB-KW"/>
</dbReference>
<dbReference type="CDD" id="cd02440">
    <property type="entry name" value="AdoMet_MTases"/>
    <property type="match status" value="1"/>
</dbReference>
<dbReference type="Gene3D" id="3.40.50.150">
    <property type="entry name" value="Vaccinia Virus protein VP39"/>
    <property type="match status" value="1"/>
</dbReference>
<dbReference type="HAMAP" id="MF_00735">
    <property type="entry name" value="Methyltr_PrmA"/>
    <property type="match status" value="1"/>
</dbReference>
<dbReference type="InterPro" id="IPR050078">
    <property type="entry name" value="Ribosomal_L11_MeTrfase_PrmA"/>
</dbReference>
<dbReference type="InterPro" id="IPR004498">
    <property type="entry name" value="Ribosomal_PrmA_MeTrfase"/>
</dbReference>
<dbReference type="InterPro" id="IPR029063">
    <property type="entry name" value="SAM-dependent_MTases_sf"/>
</dbReference>
<dbReference type="NCBIfam" id="TIGR00406">
    <property type="entry name" value="prmA"/>
    <property type="match status" value="1"/>
</dbReference>
<dbReference type="PANTHER" id="PTHR43648">
    <property type="entry name" value="ELECTRON TRANSFER FLAVOPROTEIN BETA SUBUNIT LYSINE METHYLTRANSFERASE"/>
    <property type="match status" value="1"/>
</dbReference>
<dbReference type="PANTHER" id="PTHR43648:SF1">
    <property type="entry name" value="ELECTRON TRANSFER FLAVOPROTEIN BETA SUBUNIT LYSINE METHYLTRANSFERASE"/>
    <property type="match status" value="1"/>
</dbReference>
<dbReference type="Pfam" id="PF06325">
    <property type="entry name" value="PrmA"/>
    <property type="match status" value="1"/>
</dbReference>
<dbReference type="PIRSF" id="PIRSF000401">
    <property type="entry name" value="RPL11_MTase"/>
    <property type="match status" value="1"/>
</dbReference>
<dbReference type="SUPFAM" id="SSF53335">
    <property type="entry name" value="S-adenosyl-L-methionine-dependent methyltransferases"/>
    <property type="match status" value="1"/>
</dbReference>
<comment type="function">
    <text evidence="1">Methylates ribosomal protein L11.</text>
</comment>
<comment type="catalytic activity">
    <reaction evidence="1">
        <text>L-lysyl-[protein] + 3 S-adenosyl-L-methionine = N(6),N(6),N(6)-trimethyl-L-lysyl-[protein] + 3 S-adenosyl-L-homocysteine + 3 H(+)</text>
        <dbReference type="Rhea" id="RHEA:54192"/>
        <dbReference type="Rhea" id="RHEA-COMP:9752"/>
        <dbReference type="Rhea" id="RHEA-COMP:13826"/>
        <dbReference type="ChEBI" id="CHEBI:15378"/>
        <dbReference type="ChEBI" id="CHEBI:29969"/>
        <dbReference type="ChEBI" id="CHEBI:57856"/>
        <dbReference type="ChEBI" id="CHEBI:59789"/>
        <dbReference type="ChEBI" id="CHEBI:61961"/>
    </reaction>
</comment>
<comment type="subcellular location">
    <subcellularLocation>
        <location evidence="1">Cytoplasm</location>
    </subcellularLocation>
</comment>
<comment type="similarity">
    <text evidence="1">Belongs to the methyltransferase superfamily. PrmA family.</text>
</comment>
<evidence type="ECO:0000255" key="1">
    <source>
        <dbReference type="HAMAP-Rule" id="MF_00735"/>
    </source>
</evidence>
<feature type="chain" id="PRO_1000046105" description="Ribosomal protein L11 methyltransferase">
    <location>
        <begin position="1"/>
        <end position="317"/>
    </location>
</feature>
<feature type="binding site" evidence="1">
    <location>
        <position position="158"/>
    </location>
    <ligand>
        <name>S-adenosyl-L-methionine</name>
        <dbReference type="ChEBI" id="CHEBI:59789"/>
    </ligand>
</feature>
<feature type="binding site" evidence="1">
    <location>
        <position position="179"/>
    </location>
    <ligand>
        <name>S-adenosyl-L-methionine</name>
        <dbReference type="ChEBI" id="CHEBI:59789"/>
    </ligand>
</feature>
<feature type="binding site" evidence="1">
    <location>
        <position position="201"/>
    </location>
    <ligand>
        <name>S-adenosyl-L-methionine</name>
        <dbReference type="ChEBI" id="CHEBI:59789"/>
    </ligand>
</feature>
<feature type="binding site" evidence="1">
    <location>
        <position position="244"/>
    </location>
    <ligand>
        <name>S-adenosyl-L-methionine</name>
        <dbReference type="ChEBI" id="CHEBI:59789"/>
    </ligand>
</feature>
<protein>
    <recommendedName>
        <fullName evidence="1">Ribosomal protein L11 methyltransferase</fullName>
        <shortName evidence="1">L11 Mtase</shortName>
        <ecNumber evidence="1">2.1.1.-</ecNumber>
    </recommendedName>
</protein>